<sequence length="156" mass="17641">MSRRRVIGQAEILREPKFGNLDVAKFMNVVMLSGKKSIAESIVYGAFEAIQNKTGKDPIEIFSQALSNVKPMVEVKSRRVGGANYQVPVEVRPQRRAALAMRWIREAAKKRGEKSMAQRLANELVEASEGRGAAMKRRDEVHRMAEAHKAFSHFRF</sequence>
<evidence type="ECO:0000255" key="1">
    <source>
        <dbReference type="HAMAP-Rule" id="MF_00480"/>
    </source>
</evidence>
<evidence type="ECO:0000305" key="2"/>
<organism>
    <name type="scientific">Thiomonas delicata</name>
    <name type="common">Thiomonas cuprina</name>
    <dbReference type="NCBI Taxonomy" id="364030"/>
    <lineage>
        <taxon>Bacteria</taxon>
        <taxon>Pseudomonadati</taxon>
        <taxon>Pseudomonadota</taxon>
        <taxon>Betaproteobacteria</taxon>
        <taxon>Burkholderiales</taxon>
        <taxon>Thiomonas</taxon>
    </lineage>
</organism>
<name>RS7_THIDL</name>
<gene>
    <name evidence="1" type="primary">rpsG</name>
</gene>
<protein>
    <recommendedName>
        <fullName evidence="1">Small ribosomal subunit protein uS7</fullName>
    </recommendedName>
    <alternativeName>
        <fullName evidence="2">30S ribosomal protein S7</fullName>
    </alternativeName>
</protein>
<feature type="chain" id="PRO_0000124371" description="Small ribosomal subunit protein uS7">
    <location>
        <begin position="1"/>
        <end position="156"/>
    </location>
</feature>
<comment type="function">
    <text evidence="1">One of the primary rRNA binding proteins, it binds directly to 16S rRNA where it nucleates assembly of the head domain of the 30S subunit. Is located at the subunit interface close to the decoding center, probably blocks exit of the E-site tRNA.</text>
</comment>
<comment type="subunit">
    <text evidence="1">Part of the 30S ribosomal subunit. Contacts proteins S9 and S11.</text>
</comment>
<comment type="similarity">
    <text evidence="1">Belongs to the universal ribosomal protein uS7 family.</text>
</comment>
<dbReference type="EMBL" id="U78300">
    <property type="protein sequence ID" value="AAB87732.1"/>
    <property type="molecule type" value="Genomic_DNA"/>
</dbReference>
<dbReference type="SMR" id="O50564"/>
<dbReference type="GO" id="GO:0015935">
    <property type="term" value="C:small ribosomal subunit"/>
    <property type="evidence" value="ECO:0007669"/>
    <property type="project" value="InterPro"/>
</dbReference>
<dbReference type="GO" id="GO:0019843">
    <property type="term" value="F:rRNA binding"/>
    <property type="evidence" value="ECO:0007669"/>
    <property type="project" value="UniProtKB-UniRule"/>
</dbReference>
<dbReference type="GO" id="GO:0003735">
    <property type="term" value="F:structural constituent of ribosome"/>
    <property type="evidence" value="ECO:0007669"/>
    <property type="project" value="InterPro"/>
</dbReference>
<dbReference type="GO" id="GO:0000049">
    <property type="term" value="F:tRNA binding"/>
    <property type="evidence" value="ECO:0007669"/>
    <property type="project" value="UniProtKB-UniRule"/>
</dbReference>
<dbReference type="GO" id="GO:0006412">
    <property type="term" value="P:translation"/>
    <property type="evidence" value="ECO:0007669"/>
    <property type="project" value="UniProtKB-UniRule"/>
</dbReference>
<dbReference type="CDD" id="cd14869">
    <property type="entry name" value="uS7_Bacteria"/>
    <property type="match status" value="1"/>
</dbReference>
<dbReference type="FunFam" id="1.10.455.10:FF:000001">
    <property type="entry name" value="30S ribosomal protein S7"/>
    <property type="match status" value="1"/>
</dbReference>
<dbReference type="Gene3D" id="1.10.455.10">
    <property type="entry name" value="Ribosomal protein S7 domain"/>
    <property type="match status" value="1"/>
</dbReference>
<dbReference type="HAMAP" id="MF_00480_B">
    <property type="entry name" value="Ribosomal_uS7_B"/>
    <property type="match status" value="1"/>
</dbReference>
<dbReference type="InterPro" id="IPR000235">
    <property type="entry name" value="Ribosomal_uS7"/>
</dbReference>
<dbReference type="InterPro" id="IPR005717">
    <property type="entry name" value="Ribosomal_uS7_bac/org-type"/>
</dbReference>
<dbReference type="InterPro" id="IPR020606">
    <property type="entry name" value="Ribosomal_uS7_CS"/>
</dbReference>
<dbReference type="InterPro" id="IPR023798">
    <property type="entry name" value="Ribosomal_uS7_dom"/>
</dbReference>
<dbReference type="InterPro" id="IPR036823">
    <property type="entry name" value="Ribosomal_uS7_dom_sf"/>
</dbReference>
<dbReference type="NCBIfam" id="TIGR01029">
    <property type="entry name" value="rpsG_bact"/>
    <property type="match status" value="1"/>
</dbReference>
<dbReference type="PANTHER" id="PTHR11205">
    <property type="entry name" value="RIBOSOMAL PROTEIN S7"/>
    <property type="match status" value="1"/>
</dbReference>
<dbReference type="Pfam" id="PF00177">
    <property type="entry name" value="Ribosomal_S7"/>
    <property type="match status" value="1"/>
</dbReference>
<dbReference type="PIRSF" id="PIRSF002122">
    <property type="entry name" value="RPS7p_RPS7a_RPS5e_RPS7o"/>
    <property type="match status" value="1"/>
</dbReference>
<dbReference type="SUPFAM" id="SSF47973">
    <property type="entry name" value="Ribosomal protein S7"/>
    <property type="match status" value="1"/>
</dbReference>
<dbReference type="PROSITE" id="PS00052">
    <property type="entry name" value="RIBOSOMAL_S7"/>
    <property type="match status" value="1"/>
</dbReference>
<proteinExistence type="inferred from homology"/>
<accession>O50564</accession>
<keyword id="KW-0687">Ribonucleoprotein</keyword>
<keyword id="KW-0689">Ribosomal protein</keyword>
<keyword id="KW-0694">RNA-binding</keyword>
<keyword id="KW-0699">rRNA-binding</keyword>
<keyword id="KW-0820">tRNA-binding</keyword>
<reference key="1">
    <citation type="submission" date="1996-11" db="EMBL/GenBank/DDBJ databases">
        <title>The str operon from the chemolithotrophic bacterium Thiobacillus cuprinus.</title>
        <authorList>
            <person name="Moreira D."/>
            <person name="Amils R."/>
        </authorList>
    </citation>
    <scope>NUCLEOTIDE SEQUENCE [GENOMIC DNA]</scope>
    <source>
        <strain>DSM 5495 / NBRC 102094 / Hoe5</strain>
    </source>
</reference>